<evidence type="ECO:0000250" key="1"/>
<evidence type="ECO:0000250" key="2">
    <source>
        <dbReference type="UniProtKB" id="Q7M2N1"/>
    </source>
</evidence>
<evidence type="ECO:0000250" key="3">
    <source>
        <dbReference type="UniProtKB" id="Q9DCB4"/>
    </source>
</evidence>
<evidence type="ECO:0000255" key="4"/>
<evidence type="ECO:0000255" key="5">
    <source>
        <dbReference type="PROSITE-ProRule" id="PRU00382"/>
    </source>
</evidence>
<evidence type="ECO:0000255" key="6">
    <source>
        <dbReference type="PROSITE-ProRule" id="PRU01009"/>
    </source>
</evidence>
<evidence type="ECO:0000256" key="7">
    <source>
        <dbReference type="SAM" id="MobiDB-lite"/>
    </source>
</evidence>
<evidence type="ECO:0000269" key="8">
    <source>
    </source>
</evidence>
<evidence type="ECO:0000269" key="9">
    <source>
    </source>
</evidence>
<evidence type="ECO:0000303" key="10">
    <source>
    </source>
</evidence>
<evidence type="ECO:0000303" key="11">
    <source>
    </source>
</evidence>
<evidence type="ECO:0000303" key="12">
    <source>
    </source>
</evidence>
<evidence type="ECO:0000303" key="13">
    <source>
    </source>
</evidence>
<evidence type="ECO:0000303" key="14">
    <source>
    </source>
</evidence>
<evidence type="ECO:0000305" key="15"/>
<evidence type="ECO:0000305" key="16">
    <source>
    </source>
</evidence>
<evidence type="ECO:0007744" key="17">
    <source>
    </source>
</evidence>
<sequence>MSEQGDLNQAIAEEGGTEQETATPENGIVKSESLDEEEKLELQRRLEAQNQERRKSKSGAGKGKLTRSLAVCEESSARPGGESLQDQESIHLQLSSFSSLQEEDKSRKDDSEREKEKDKNKDKTSEKPKIRMLSKDCSQEYTDSTGIDLHEFLINTLKNNSRDRMILLKMEQEIIDFIADNNNHYKKFPQMSSYQRMLVHRVAAYFGLDHNVDQTGKSVIINKTSSTRIPEQRFCEHLKDEKGEESQKRFILKRDNSSIDKEDNQQNRMHPFRDDRRSKSIEEREEEYQRVRERIFAHDSVCSQESLFVENSRLLEDSNICNETYKKRQLFRGNRDGSGRTSGSRQSSSENELKWSDHQRAWSSTDSDSSNRNLKPAMTKTASFGGITVLTRGDSTSSTRSTGKLSKAGSESSSSAGSSGSLSRTHPPLQSTPLVSGVAAGSPGCVPYPENGIGGQVAPSSTSYILLPLEAATGIPPGSILLNPHTGQPFVNPDGTPAIYNPPTSQQPLRSAMVGQSQQQPPQQQPSPQPQQQVQPPQPQMAGPLVTQRDDVATQFGQMTLSRQSSGETPEPPSGPVYPSSLMPQPAQQPSYVIASTGQQLPTGGFSGSGPPISQQVLQPPPSPQGFVQQPPPAQMPVYYYPSGQYPTSTTQQYRPMAPVQYNAQRSQQMPQAAQQAGYQPVLSGQQGFQGLIGVQQPPQSQNVINNQQGTPVQSVMVSYPTMSSYQVPMTQGSQGLPQQSYQQPIMLPNQAGQGSLPATGMPVYCNVTPPTPQNNLRLIGPHCPSSTVPVMSASCRTNCASMSNAGWQVKF</sequence>
<organism>
    <name type="scientific">Homo sapiens</name>
    <name type="common">Human</name>
    <dbReference type="NCBI Taxonomy" id="9606"/>
    <lineage>
        <taxon>Eukaryota</taxon>
        <taxon>Metazoa</taxon>
        <taxon>Chordata</taxon>
        <taxon>Craniata</taxon>
        <taxon>Vertebrata</taxon>
        <taxon>Euteleostomi</taxon>
        <taxon>Mammalia</taxon>
        <taxon>Eutheria</taxon>
        <taxon>Euarchontoglires</taxon>
        <taxon>Primates</taxon>
        <taxon>Haplorrhini</taxon>
        <taxon>Catarrhini</taxon>
        <taxon>Hominidae</taxon>
        <taxon>Homo</taxon>
    </lineage>
</organism>
<accession>Q9UBL0</accession>
<accession>B4DG96</accession>
<accession>Q49AK3</accession>
<accession>Q49AS6</accession>
<accession>Q4G0V4</accession>
<accession>Q6NYC3</accession>
<accession>Q86V31</accession>
<accession>Q9UF93</accession>
<gene>
    <name type="primary">ARPP21</name>
    <name type="synonym">TARPP</name>
</gene>
<reference key="1">
    <citation type="journal article" date="1994" name="J. Neurosci.">
        <title>Expression of mRNAs encoding ARPP-16/19, ARPP-21, and DARPP-32 in human brain tissue.</title>
        <authorList>
            <person name="Brene S."/>
            <person name="Lindefors N."/>
            <person name="Ehrlich M."/>
            <person name="Taubes T."/>
            <person name="Horiuchi A."/>
            <person name="Kopp J."/>
            <person name="Hall H."/>
            <person name="Sedvall G."/>
            <person name="Greengard P."/>
            <person name="Persson H."/>
        </authorList>
    </citation>
    <scope>NUCLEOTIDE SEQUENCE [MRNA] (ISOFORM 2)</scope>
    <scope>TISSUE SPECIFICITY</scope>
    <source>
        <tissue>Brain</tissue>
    </source>
</reference>
<reference key="2">
    <citation type="journal article" date="2000" name="Proc. Natl. Acad. Sci. U.S.A.">
        <title>Gene expression profiling in the human hypothalamus-pituitary-adrenal axis and full-length cDNA cloning.</title>
        <authorList>
            <person name="Hu R.-M."/>
            <person name="Han Z.-G."/>
            <person name="Song H.-D."/>
            <person name="Peng Y.-D."/>
            <person name="Huang Q.-H."/>
            <person name="Ren S.-X."/>
            <person name="Gu Y.-J."/>
            <person name="Huang C.-H."/>
            <person name="Li Y.-B."/>
            <person name="Jiang C.-L."/>
            <person name="Fu G."/>
            <person name="Zhang Q.-H."/>
            <person name="Gu B.-W."/>
            <person name="Dai M."/>
            <person name="Mao Y.-F."/>
            <person name="Gao G.-F."/>
            <person name="Rong R."/>
            <person name="Ye M."/>
            <person name="Zhou J."/>
            <person name="Xu S.-H."/>
            <person name="Gu J."/>
            <person name="Shi J.-X."/>
            <person name="Jin W.-R."/>
            <person name="Zhang C.-K."/>
            <person name="Wu T.-M."/>
            <person name="Huang G.-Y."/>
            <person name="Chen Z."/>
            <person name="Chen M.-D."/>
            <person name="Chen J.-L."/>
        </authorList>
    </citation>
    <scope>NUCLEOTIDE SEQUENCE [LARGE SCALE MRNA] (ISOFORM 2)</scope>
    <source>
        <tissue>Hypothalamus</tissue>
    </source>
</reference>
<reference key="3">
    <citation type="journal article" date="2004" name="Nat. Genet.">
        <title>Complete sequencing and characterization of 21,243 full-length human cDNAs.</title>
        <authorList>
            <person name="Ota T."/>
            <person name="Suzuki Y."/>
            <person name="Nishikawa T."/>
            <person name="Otsuki T."/>
            <person name="Sugiyama T."/>
            <person name="Irie R."/>
            <person name="Wakamatsu A."/>
            <person name="Hayashi K."/>
            <person name="Sato H."/>
            <person name="Nagai K."/>
            <person name="Kimura K."/>
            <person name="Makita H."/>
            <person name="Sekine M."/>
            <person name="Obayashi M."/>
            <person name="Nishi T."/>
            <person name="Shibahara T."/>
            <person name="Tanaka T."/>
            <person name="Ishii S."/>
            <person name="Yamamoto J."/>
            <person name="Saito K."/>
            <person name="Kawai Y."/>
            <person name="Isono Y."/>
            <person name="Nakamura Y."/>
            <person name="Nagahari K."/>
            <person name="Murakami K."/>
            <person name="Yasuda T."/>
            <person name="Iwayanagi T."/>
            <person name="Wagatsuma M."/>
            <person name="Shiratori A."/>
            <person name="Sudo H."/>
            <person name="Hosoiri T."/>
            <person name="Kaku Y."/>
            <person name="Kodaira H."/>
            <person name="Kondo H."/>
            <person name="Sugawara M."/>
            <person name="Takahashi M."/>
            <person name="Kanda K."/>
            <person name="Yokoi T."/>
            <person name="Furuya T."/>
            <person name="Kikkawa E."/>
            <person name="Omura Y."/>
            <person name="Abe K."/>
            <person name="Kamihara K."/>
            <person name="Katsuta N."/>
            <person name="Sato K."/>
            <person name="Tanikawa M."/>
            <person name="Yamazaki M."/>
            <person name="Ninomiya K."/>
            <person name="Ishibashi T."/>
            <person name="Yamashita H."/>
            <person name="Murakawa K."/>
            <person name="Fujimori K."/>
            <person name="Tanai H."/>
            <person name="Kimata M."/>
            <person name="Watanabe M."/>
            <person name="Hiraoka S."/>
            <person name="Chiba Y."/>
            <person name="Ishida S."/>
            <person name="Ono Y."/>
            <person name="Takiguchi S."/>
            <person name="Watanabe S."/>
            <person name="Yosida M."/>
            <person name="Hotuta T."/>
            <person name="Kusano J."/>
            <person name="Kanehori K."/>
            <person name="Takahashi-Fujii A."/>
            <person name="Hara H."/>
            <person name="Tanase T.-O."/>
            <person name="Nomura Y."/>
            <person name="Togiya S."/>
            <person name="Komai F."/>
            <person name="Hara R."/>
            <person name="Takeuchi K."/>
            <person name="Arita M."/>
            <person name="Imose N."/>
            <person name="Musashino K."/>
            <person name="Yuuki H."/>
            <person name="Oshima A."/>
            <person name="Sasaki N."/>
            <person name="Aotsuka S."/>
            <person name="Yoshikawa Y."/>
            <person name="Matsunawa H."/>
            <person name="Ichihara T."/>
            <person name="Shiohata N."/>
            <person name="Sano S."/>
            <person name="Moriya S."/>
            <person name="Momiyama H."/>
            <person name="Satoh N."/>
            <person name="Takami S."/>
            <person name="Terashima Y."/>
            <person name="Suzuki O."/>
            <person name="Nakagawa S."/>
            <person name="Senoh A."/>
            <person name="Mizoguchi H."/>
            <person name="Goto Y."/>
            <person name="Shimizu F."/>
            <person name="Wakebe H."/>
            <person name="Hishigaki H."/>
            <person name="Watanabe T."/>
            <person name="Sugiyama A."/>
            <person name="Takemoto M."/>
            <person name="Kawakami B."/>
            <person name="Yamazaki M."/>
            <person name="Watanabe K."/>
            <person name="Kumagai A."/>
            <person name="Itakura S."/>
            <person name="Fukuzumi Y."/>
            <person name="Fujimori Y."/>
            <person name="Komiyama M."/>
            <person name="Tashiro H."/>
            <person name="Tanigami A."/>
            <person name="Fujiwara T."/>
            <person name="Ono T."/>
            <person name="Yamada K."/>
            <person name="Fujii Y."/>
            <person name="Ozaki K."/>
            <person name="Hirao M."/>
            <person name="Ohmori Y."/>
            <person name="Kawabata A."/>
            <person name="Hikiji T."/>
            <person name="Kobatake N."/>
            <person name="Inagaki H."/>
            <person name="Ikema Y."/>
            <person name="Okamoto S."/>
            <person name="Okitani R."/>
            <person name="Kawakami T."/>
            <person name="Noguchi S."/>
            <person name="Itoh T."/>
            <person name="Shigeta K."/>
            <person name="Senba T."/>
            <person name="Matsumura K."/>
            <person name="Nakajima Y."/>
            <person name="Mizuno T."/>
            <person name="Morinaga M."/>
            <person name="Sasaki M."/>
            <person name="Togashi T."/>
            <person name="Oyama M."/>
            <person name="Hata H."/>
            <person name="Watanabe M."/>
            <person name="Komatsu T."/>
            <person name="Mizushima-Sugano J."/>
            <person name="Satoh T."/>
            <person name="Shirai Y."/>
            <person name="Takahashi Y."/>
            <person name="Nakagawa K."/>
            <person name="Okumura K."/>
            <person name="Nagase T."/>
            <person name="Nomura N."/>
            <person name="Kikuchi H."/>
            <person name="Masuho Y."/>
            <person name="Yamashita R."/>
            <person name="Nakai K."/>
            <person name="Yada T."/>
            <person name="Nakamura Y."/>
            <person name="Ohara O."/>
            <person name="Isogai T."/>
            <person name="Sugano S."/>
        </authorList>
    </citation>
    <scope>NUCLEOTIDE SEQUENCE [LARGE SCALE MRNA] (ISOFORM 3)</scope>
    <source>
        <tissue>Amygdala</tissue>
    </source>
</reference>
<reference key="4">
    <citation type="submission" date="2005-07" db="EMBL/GenBank/DDBJ databases">
        <authorList>
            <person name="Mural R.J."/>
            <person name="Istrail S."/>
            <person name="Sutton G.G."/>
            <person name="Florea L."/>
            <person name="Halpern A.L."/>
            <person name="Mobarry C.M."/>
            <person name="Lippert R."/>
            <person name="Walenz B."/>
            <person name="Shatkay H."/>
            <person name="Dew I."/>
            <person name="Miller J.R."/>
            <person name="Flanigan M.J."/>
            <person name="Edwards N.J."/>
            <person name="Bolanos R."/>
            <person name="Fasulo D."/>
            <person name="Halldorsson B.V."/>
            <person name="Hannenhalli S."/>
            <person name="Turner R."/>
            <person name="Yooseph S."/>
            <person name="Lu F."/>
            <person name="Nusskern D.R."/>
            <person name="Shue B.C."/>
            <person name="Zheng X.H."/>
            <person name="Zhong F."/>
            <person name="Delcher A.L."/>
            <person name="Huson D.H."/>
            <person name="Kravitz S.A."/>
            <person name="Mouchard L."/>
            <person name="Reinert K."/>
            <person name="Remington K.A."/>
            <person name="Clark A.G."/>
            <person name="Waterman M.S."/>
            <person name="Eichler E.E."/>
            <person name="Adams M.D."/>
            <person name="Hunkapiller M.W."/>
            <person name="Myers E.W."/>
            <person name="Venter J.C."/>
        </authorList>
    </citation>
    <scope>NUCLEOTIDE SEQUENCE [LARGE SCALE GENOMIC DNA]</scope>
</reference>
<reference key="5">
    <citation type="journal article" date="2004" name="Genome Res.">
        <title>The status, quality, and expansion of the NIH full-length cDNA project: the Mammalian Gene Collection (MGC).</title>
        <authorList>
            <consortium name="The MGC Project Team"/>
        </authorList>
    </citation>
    <scope>NUCLEOTIDE SEQUENCE [LARGE SCALE MRNA] (ISOFORMS 1; 2; 4; 5 AND 6)</scope>
    <source>
        <tissue>Hippocampus</tissue>
        <tissue>Lung</tissue>
        <tissue>Testis</tissue>
    </source>
</reference>
<reference key="6">
    <citation type="journal article" date="2007" name="BMC Genomics">
        <title>The full-ORF clone resource of the German cDNA consortium.</title>
        <authorList>
            <person name="Bechtel S."/>
            <person name="Rosenfelder H."/>
            <person name="Duda A."/>
            <person name="Schmidt C.P."/>
            <person name="Ernst U."/>
            <person name="Wellenreuther R."/>
            <person name="Mehrle A."/>
            <person name="Schuster C."/>
            <person name="Bahr A."/>
            <person name="Bloecker H."/>
            <person name="Heubner D."/>
            <person name="Hoerlein A."/>
            <person name="Michel G."/>
            <person name="Wedler H."/>
            <person name="Koehrer K."/>
            <person name="Ottenwaelder B."/>
            <person name="Poustka A."/>
            <person name="Wiemann S."/>
            <person name="Schupp I."/>
        </authorList>
    </citation>
    <scope>NUCLEOTIDE SEQUENCE [LARGE SCALE MRNA] OF 162-812 (ISOFORM 3)</scope>
    <source>
        <tissue>Kidney</tissue>
    </source>
</reference>
<reference key="7">
    <citation type="journal article" date="2004" name="Anal. Chem.">
        <title>Robust phosphoproteomic profiling of tyrosine phosphorylation sites from human T cells using immobilized metal affinity chromatography and tandem mass spectrometry.</title>
        <authorList>
            <person name="Brill L.M."/>
            <person name="Salomon A.R."/>
            <person name="Ficarro S.B."/>
            <person name="Mukherji M."/>
            <person name="Stettler-Gill M."/>
            <person name="Peters E.C."/>
        </authorList>
    </citation>
    <scope>IDENTIFICATION BY MASS SPECTROMETRY [LARGE SCALE ANALYSIS]</scope>
    <source>
        <tissue>Leukemic T-cell</tissue>
    </source>
</reference>
<reference key="8">
    <citation type="journal article" date="2004" name="J. Biol. Chem.">
        <title>Loss of CARM1 results in hypomethylation of thymocyte cyclic AMP-regulated phosphoprotein and deregulated early T cell development.</title>
        <authorList>
            <person name="Kim J."/>
            <person name="Lee J."/>
            <person name="Yadav N."/>
            <person name="Wu Q."/>
            <person name="Carter C."/>
            <person name="Richard S."/>
            <person name="Richie E."/>
            <person name="Bedford M.T."/>
        </authorList>
    </citation>
    <scope>TISSUE SPECIFICITY</scope>
    <scope>METHYLATION AT ARG-655</scope>
</reference>
<reference key="9">
    <citation type="journal article" date="2009" name="Sci. Signal.">
        <title>Quantitative phosphoproteomic analysis of T cell receptor signaling reveals system-wide modulation of protein-protein interactions.</title>
        <authorList>
            <person name="Mayya V."/>
            <person name="Lundgren D.H."/>
            <person name="Hwang S.-I."/>
            <person name="Rezaul K."/>
            <person name="Wu L."/>
            <person name="Eng J.K."/>
            <person name="Rodionov V."/>
            <person name="Han D.K."/>
        </authorList>
    </citation>
    <scope>PHOSPHORYLATION [LARGE SCALE ANALYSIS] AT SER-33; SER-383 AND SER-562</scope>
    <scope>IDENTIFICATION BY MASS SPECTROMETRY [LARGE SCALE ANALYSIS]</scope>
    <source>
        <tissue>Leukemic T-cell</tissue>
    </source>
</reference>
<protein>
    <recommendedName>
        <fullName>cAMP-regulated phosphoprotein 21</fullName>
        <shortName>ARPP-21</shortName>
    </recommendedName>
    <alternativeName>
        <fullName>Thymocyte cAMP-regulated phosphoprotein</fullName>
    </alternativeName>
</protein>
<name>ARP21_HUMAN</name>
<dbReference type="EMBL" id="AF112220">
    <property type="protein sequence ID" value="AAF17207.1"/>
    <property type="molecule type" value="mRNA"/>
</dbReference>
<dbReference type="EMBL" id="AK294484">
    <property type="protein sequence ID" value="BAG57707.1"/>
    <property type="molecule type" value="mRNA"/>
</dbReference>
<dbReference type="EMBL" id="CH471055">
    <property type="protein sequence ID" value="EAW64471.1"/>
    <property type="molecule type" value="Genomic_DNA"/>
</dbReference>
<dbReference type="EMBL" id="BC017805">
    <property type="protein sequence ID" value="AAH17805.1"/>
    <property type="molecule type" value="mRNA"/>
</dbReference>
<dbReference type="EMBL" id="BC031106">
    <property type="protein sequence ID" value="AAH31106.1"/>
    <property type="molecule type" value="mRNA"/>
</dbReference>
<dbReference type="EMBL" id="BC036399">
    <property type="protein sequence ID" value="AAH36399.1"/>
    <property type="molecule type" value="mRNA"/>
</dbReference>
<dbReference type="EMBL" id="BC041385">
    <property type="protein sequence ID" value="AAH41385.1"/>
    <property type="molecule type" value="mRNA"/>
</dbReference>
<dbReference type="EMBL" id="BC051828">
    <property type="protein sequence ID" value="AAH51828.1"/>
    <property type="molecule type" value="mRNA"/>
</dbReference>
<dbReference type="EMBL" id="BC066651">
    <property type="protein sequence ID" value="AAH66651.1"/>
    <property type="molecule type" value="mRNA"/>
</dbReference>
<dbReference type="EMBL" id="AL133109">
    <property type="protein sequence ID" value="CAB61414.1"/>
    <property type="molecule type" value="mRNA"/>
</dbReference>
<dbReference type="CCDS" id="CCDS2661.1">
    <molecule id="Q9UBL0-1"/>
</dbReference>
<dbReference type="CCDS" id="CCDS43063.1">
    <molecule id="Q9UBL0-2"/>
</dbReference>
<dbReference type="CCDS" id="CCDS58823.1">
    <molecule id="Q9UBL0-3"/>
</dbReference>
<dbReference type="CCDS" id="CCDS58824.1">
    <molecule id="Q9UBL0-4"/>
</dbReference>
<dbReference type="PIR" id="T42644">
    <property type="entry name" value="T42644"/>
</dbReference>
<dbReference type="RefSeq" id="NP_001020239.1">
    <molecule id="Q9UBL0-2"/>
    <property type="nucleotide sequence ID" value="NM_001025068.1"/>
</dbReference>
<dbReference type="RefSeq" id="NP_001020240.1">
    <molecule id="Q9UBL0-2"/>
    <property type="nucleotide sequence ID" value="NM_001025069.1"/>
</dbReference>
<dbReference type="RefSeq" id="NP_001254545.1">
    <molecule id="Q9UBL0-2"/>
    <property type="nucleotide sequence ID" value="NM_001267616.2"/>
</dbReference>
<dbReference type="RefSeq" id="NP_001254546.1">
    <molecule id="Q9UBL0-4"/>
    <property type="nucleotide sequence ID" value="NM_001267617.2"/>
</dbReference>
<dbReference type="RefSeq" id="NP_001254547.1">
    <molecule id="Q9UBL0-2"/>
    <property type="nucleotide sequence ID" value="NM_001267618.2"/>
</dbReference>
<dbReference type="RefSeq" id="NP_001254548.1">
    <molecule id="Q9UBL0-3"/>
    <property type="nucleotide sequence ID" value="NM_001267619.2"/>
</dbReference>
<dbReference type="RefSeq" id="NP_001372413.1">
    <molecule id="Q9UBL0-3"/>
    <property type="nucleotide sequence ID" value="NM_001385484.1"/>
</dbReference>
<dbReference type="RefSeq" id="NP_001372414.1">
    <molecule id="Q9UBL0-3"/>
    <property type="nucleotide sequence ID" value="NM_001385485.1"/>
</dbReference>
<dbReference type="RefSeq" id="NP_001372415.1">
    <molecule id="Q9UBL0-3"/>
    <property type="nucleotide sequence ID" value="NM_001385486.1"/>
</dbReference>
<dbReference type="RefSeq" id="NP_001372416.1">
    <molecule id="Q9UBL0-3"/>
    <property type="nucleotide sequence ID" value="NM_001385487.1"/>
</dbReference>
<dbReference type="RefSeq" id="NP_001372417.1">
    <molecule id="Q9UBL0-4"/>
    <property type="nucleotide sequence ID" value="NM_001385488.1"/>
</dbReference>
<dbReference type="RefSeq" id="NP_001372418.1">
    <molecule id="Q9UBL0-4"/>
    <property type="nucleotide sequence ID" value="NM_001385489.1"/>
</dbReference>
<dbReference type="RefSeq" id="NP_001372421.1">
    <molecule id="Q9UBL0-4"/>
    <property type="nucleotide sequence ID" value="NM_001385492.1"/>
</dbReference>
<dbReference type="RefSeq" id="NP_001372426.1">
    <molecule id="Q9UBL0-4"/>
    <property type="nucleotide sequence ID" value="NM_001385497.1"/>
</dbReference>
<dbReference type="RefSeq" id="NP_001372493.1">
    <molecule id="Q9UBL0-3"/>
    <property type="nucleotide sequence ID" value="NM_001385564.1"/>
</dbReference>
<dbReference type="RefSeq" id="NP_001372494.1">
    <molecule id="Q9UBL0-4"/>
    <property type="nucleotide sequence ID" value="NM_001385565.1"/>
</dbReference>
<dbReference type="RefSeq" id="NP_001372503.1">
    <molecule id="Q9UBL0-4"/>
    <property type="nucleotide sequence ID" value="NM_001385574.1"/>
</dbReference>
<dbReference type="RefSeq" id="NP_001372505.1">
    <molecule id="Q9UBL0-4"/>
    <property type="nucleotide sequence ID" value="NM_001385576.1"/>
</dbReference>
<dbReference type="RefSeq" id="NP_001372506.1">
    <molecule id="Q9UBL0-4"/>
    <property type="nucleotide sequence ID" value="NM_001385577.1"/>
</dbReference>
<dbReference type="RefSeq" id="NP_001372507.1">
    <molecule id="Q9UBL0-4"/>
    <property type="nucleotide sequence ID" value="NM_001385578.1"/>
</dbReference>
<dbReference type="RefSeq" id="NP_001372509.1">
    <molecule id="Q9UBL0-4"/>
    <property type="nucleotide sequence ID" value="NM_001385580.1"/>
</dbReference>
<dbReference type="RefSeq" id="NP_001372510.1">
    <molecule id="Q9UBL0-4"/>
    <property type="nucleotide sequence ID" value="NM_001385581.1"/>
</dbReference>
<dbReference type="RefSeq" id="NP_001372516.1">
    <molecule id="Q9UBL0-3"/>
    <property type="nucleotide sequence ID" value="NM_001385587.1"/>
</dbReference>
<dbReference type="RefSeq" id="NP_001372517.1">
    <molecule id="Q9UBL0-3"/>
    <property type="nucleotide sequence ID" value="NM_001385588.2"/>
</dbReference>
<dbReference type="RefSeq" id="NP_057384.2">
    <molecule id="Q9UBL0-1"/>
    <property type="nucleotide sequence ID" value="NM_016300.4"/>
</dbReference>
<dbReference type="RefSeq" id="NP_938409.1">
    <molecule id="Q9UBL0-2"/>
    <property type="nucleotide sequence ID" value="NM_198399.2"/>
</dbReference>
<dbReference type="RefSeq" id="XP_006713006.1">
    <property type="nucleotide sequence ID" value="XM_006712943.2"/>
</dbReference>
<dbReference type="RefSeq" id="XP_006713007.1">
    <property type="nucleotide sequence ID" value="XM_006712944.2"/>
</dbReference>
<dbReference type="RefSeq" id="XP_016861081.1">
    <property type="nucleotide sequence ID" value="XM_017005592.1"/>
</dbReference>
<dbReference type="RefSeq" id="XP_016861082.1">
    <property type="nucleotide sequence ID" value="XM_017005593.1"/>
</dbReference>
<dbReference type="RefSeq" id="XP_016861083.1">
    <property type="nucleotide sequence ID" value="XM_017005594.1"/>
</dbReference>
<dbReference type="RefSeq" id="XP_016861084.1">
    <property type="nucleotide sequence ID" value="XM_017005595.1"/>
</dbReference>
<dbReference type="RefSeq" id="XP_016861091.1">
    <property type="nucleotide sequence ID" value="XM_017005602.1"/>
</dbReference>
<dbReference type="RefSeq" id="XP_016861092.1">
    <property type="nucleotide sequence ID" value="XM_017005603.1"/>
</dbReference>
<dbReference type="RefSeq" id="XP_016861093.1">
    <property type="nucleotide sequence ID" value="XM_017005604.1"/>
</dbReference>
<dbReference type="RefSeq" id="XP_016861094.1">
    <property type="nucleotide sequence ID" value="XM_017005605.1"/>
</dbReference>
<dbReference type="RefSeq" id="XP_016861095.1">
    <property type="nucleotide sequence ID" value="XM_017005606.1"/>
</dbReference>
<dbReference type="RefSeq" id="XP_024309091.1">
    <molecule id="Q9UBL0-4"/>
    <property type="nucleotide sequence ID" value="XM_024453323.2"/>
</dbReference>
<dbReference type="RefSeq" id="XP_054201002.1">
    <molecule id="Q9UBL0-4"/>
    <property type="nucleotide sequence ID" value="XM_054345027.1"/>
</dbReference>
<dbReference type="SMR" id="Q9UBL0"/>
<dbReference type="BioGRID" id="115995">
    <property type="interactions" value="3"/>
</dbReference>
<dbReference type="FunCoup" id="Q9UBL0">
    <property type="interactions" value="18"/>
</dbReference>
<dbReference type="IntAct" id="Q9UBL0">
    <property type="interactions" value="3"/>
</dbReference>
<dbReference type="STRING" id="9606.ENSP00000412326"/>
<dbReference type="GlyGen" id="Q9UBL0">
    <property type="glycosylation" value="4 sites, 1 O-linked glycan (1 site)"/>
</dbReference>
<dbReference type="iPTMnet" id="Q9UBL0"/>
<dbReference type="PhosphoSitePlus" id="Q9UBL0"/>
<dbReference type="BioMuta" id="ARPP21"/>
<dbReference type="DMDM" id="160332340"/>
<dbReference type="jPOST" id="Q9UBL0"/>
<dbReference type="MassIVE" id="Q9UBL0"/>
<dbReference type="PaxDb" id="9606-ENSP00000412326"/>
<dbReference type="PeptideAtlas" id="Q9UBL0"/>
<dbReference type="ProteomicsDB" id="83988">
    <molecule id="Q9UBL0-1"/>
</dbReference>
<dbReference type="ProteomicsDB" id="83989">
    <molecule id="Q9UBL0-2"/>
</dbReference>
<dbReference type="ProteomicsDB" id="83990">
    <molecule id="Q9UBL0-3"/>
</dbReference>
<dbReference type="ProteomicsDB" id="83991">
    <molecule id="Q9UBL0-4"/>
</dbReference>
<dbReference type="ProteomicsDB" id="83992">
    <molecule id="Q9UBL0-5"/>
</dbReference>
<dbReference type="ProteomicsDB" id="83993">
    <molecule id="Q9UBL0-6"/>
</dbReference>
<dbReference type="Antibodypedia" id="2806">
    <property type="antibodies" value="154 antibodies from 27 providers"/>
</dbReference>
<dbReference type="DNASU" id="10777"/>
<dbReference type="Ensembl" id="ENST00000187397.8">
    <molecule id="Q9UBL0-1"/>
    <property type="protein sequence ID" value="ENSP00000187397.4"/>
    <property type="gene ID" value="ENSG00000172995.17"/>
</dbReference>
<dbReference type="Ensembl" id="ENST00000396481.6">
    <molecule id="Q9UBL0-2"/>
    <property type="protein sequence ID" value="ENSP00000379741.2"/>
    <property type="gene ID" value="ENSG00000172995.17"/>
</dbReference>
<dbReference type="Ensembl" id="ENST00000396482.6">
    <molecule id="Q9UBL0-2"/>
    <property type="protein sequence ID" value="ENSP00000379742.2"/>
    <property type="gene ID" value="ENSG00000172995.17"/>
</dbReference>
<dbReference type="Ensembl" id="ENST00000412048.5">
    <molecule id="Q9UBL0-2"/>
    <property type="protein sequence ID" value="ENSP00000390151.1"/>
    <property type="gene ID" value="ENSG00000172995.17"/>
</dbReference>
<dbReference type="Ensembl" id="ENST00000417925.5">
    <molecule id="Q9UBL0-3"/>
    <property type="protein sequence ID" value="ENSP00000412326.1"/>
    <property type="gene ID" value="ENSG00000172995.17"/>
</dbReference>
<dbReference type="Ensembl" id="ENST00000427542.5">
    <molecule id="Q9UBL0-2"/>
    <property type="protein sequence ID" value="ENSP00000401602.1"/>
    <property type="gene ID" value="ENSG00000172995.17"/>
</dbReference>
<dbReference type="Ensembl" id="ENST00000428373.5">
    <molecule id="Q9UBL0-2"/>
    <property type="protein sequence ID" value="ENSP00000412411.1"/>
    <property type="gene ID" value="ENSG00000172995.17"/>
</dbReference>
<dbReference type="Ensembl" id="ENST00000432682.5">
    <molecule id="Q9UBL0-2"/>
    <property type="protein sequence ID" value="ENSP00000389754.1"/>
    <property type="gene ID" value="ENSG00000172995.17"/>
</dbReference>
<dbReference type="Ensembl" id="ENST00000436702.5">
    <molecule id="Q9UBL0-2"/>
    <property type="protein sequence ID" value="ENSP00000397720.1"/>
    <property type="gene ID" value="ENSG00000172995.17"/>
</dbReference>
<dbReference type="Ensembl" id="ENST00000438071.1">
    <molecule id="Q9UBL0-2"/>
    <property type="protein sequence ID" value="ENSP00000410171.1"/>
    <property type="gene ID" value="ENSG00000172995.17"/>
</dbReference>
<dbReference type="Ensembl" id="ENST00000441454.5">
    <molecule id="Q9UBL0-2"/>
    <property type="protein sequence ID" value="ENSP00000406964.1"/>
    <property type="gene ID" value="ENSG00000172995.17"/>
</dbReference>
<dbReference type="Ensembl" id="ENST00000444190.5">
    <molecule id="Q9UBL0-4"/>
    <property type="protein sequence ID" value="ENSP00000405276.1"/>
    <property type="gene ID" value="ENSG00000172995.17"/>
</dbReference>
<dbReference type="Ensembl" id="ENST00000474696.5">
    <molecule id="Q9UBL0-2"/>
    <property type="protein sequence ID" value="ENSP00000417838.1"/>
    <property type="gene ID" value="ENSG00000172995.17"/>
</dbReference>
<dbReference type="GeneID" id="10777"/>
<dbReference type="KEGG" id="hsa:10777"/>
<dbReference type="UCSC" id="uc003cfz.5">
    <molecule id="Q9UBL0-1"/>
    <property type="organism name" value="human"/>
</dbReference>
<dbReference type="AGR" id="HGNC:16968"/>
<dbReference type="CTD" id="10777"/>
<dbReference type="DisGeNET" id="10777"/>
<dbReference type="GeneCards" id="ARPP21"/>
<dbReference type="HGNC" id="HGNC:16968">
    <property type="gene designation" value="ARPP21"/>
</dbReference>
<dbReference type="HPA" id="ENSG00000172995">
    <property type="expression patterns" value="Tissue enriched (brain)"/>
</dbReference>
<dbReference type="MalaCards" id="ARPP21"/>
<dbReference type="MIM" id="605488">
    <property type="type" value="gene"/>
</dbReference>
<dbReference type="neXtProt" id="NX_Q9UBL0"/>
<dbReference type="OpenTargets" id="ENSG00000172995"/>
<dbReference type="VEuPathDB" id="HostDB:ENSG00000172995"/>
<dbReference type="eggNOG" id="KOG2953">
    <property type="taxonomic scope" value="Eukaryota"/>
</dbReference>
<dbReference type="GeneTree" id="ENSGT00940000160796"/>
<dbReference type="HOGENOM" id="CLU_2256194_0_0_1"/>
<dbReference type="InParanoid" id="Q9UBL0"/>
<dbReference type="OMA" id="SSGCVPY"/>
<dbReference type="OrthoDB" id="278430at2759"/>
<dbReference type="PAN-GO" id="Q9UBL0">
    <property type="GO annotations" value="1 GO annotation based on evolutionary models"/>
</dbReference>
<dbReference type="PhylomeDB" id="Q9UBL0"/>
<dbReference type="TreeFam" id="TF315915"/>
<dbReference type="PathwayCommons" id="Q9UBL0"/>
<dbReference type="SignaLink" id="Q9UBL0"/>
<dbReference type="SIGNOR" id="Q9UBL0"/>
<dbReference type="BioGRID-ORCS" id="10777">
    <property type="hits" value="8 hits in 1139 CRISPR screens"/>
</dbReference>
<dbReference type="ChiTaRS" id="ARPP21">
    <property type="organism name" value="human"/>
</dbReference>
<dbReference type="GeneWiki" id="ARPP-21"/>
<dbReference type="GenomeRNAi" id="10777"/>
<dbReference type="Pharos" id="Q9UBL0">
    <property type="development level" value="Tbio"/>
</dbReference>
<dbReference type="PRO" id="PR:Q9UBL0"/>
<dbReference type="Proteomes" id="UP000005640">
    <property type="component" value="Chromosome 3"/>
</dbReference>
<dbReference type="RNAct" id="Q9UBL0">
    <property type="molecule type" value="protein"/>
</dbReference>
<dbReference type="Bgee" id="ENSG00000172995">
    <property type="expression patterns" value="Expressed in lateral globus pallidus and 134 other cell types or tissues"/>
</dbReference>
<dbReference type="ExpressionAtlas" id="Q9UBL0">
    <property type="expression patterns" value="baseline and differential"/>
</dbReference>
<dbReference type="GO" id="GO:0005737">
    <property type="term" value="C:cytoplasm"/>
    <property type="evidence" value="ECO:0000318"/>
    <property type="project" value="GO_Central"/>
</dbReference>
<dbReference type="GO" id="GO:0005516">
    <property type="term" value="F:calmodulin binding"/>
    <property type="evidence" value="ECO:0007669"/>
    <property type="project" value="UniProtKB-KW"/>
</dbReference>
<dbReference type="GO" id="GO:0003676">
    <property type="term" value="F:nucleic acid binding"/>
    <property type="evidence" value="ECO:0007669"/>
    <property type="project" value="InterPro"/>
</dbReference>
<dbReference type="CDD" id="cd02642">
    <property type="entry name" value="R3H_encore_like"/>
    <property type="match status" value="1"/>
</dbReference>
<dbReference type="FunFam" id="3.30.1370.50:FF:000001">
    <property type="entry name" value="R3H domain-containing protein 2 isoform 1"/>
    <property type="match status" value="1"/>
</dbReference>
<dbReference type="Gene3D" id="3.30.1370.50">
    <property type="entry name" value="R3H-like domain"/>
    <property type="match status" value="1"/>
</dbReference>
<dbReference type="InterPro" id="IPR001374">
    <property type="entry name" value="R3H_dom"/>
</dbReference>
<dbReference type="InterPro" id="IPR036867">
    <property type="entry name" value="R3H_dom_sf"/>
</dbReference>
<dbReference type="InterPro" id="IPR051937">
    <property type="entry name" value="R3H_domain_containing"/>
</dbReference>
<dbReference type="InterPro" id="IPR024771">
    <property type="entry name" value="SUZ"/>
</dbReference>
<dbReference type="PANTHER" id="PTHR15672:SF14">
    <property type="entry name" value="CAMP-REGULATED PHOSPHOPROTEIN 21"/>
    <property type="match status" value="1"/>
</dbReference>
<dbReference type="PANTHER" id="PTHR15672">
    <property type="entry name" value="CAMP-REGULATED PHOSPHOPROTEIN 21 RELATED R3H DOMAIN CONTAINING PROTEIN"/>
    <property type="match status" value="1"/>
</dbReference>
<dbReference type="Pfam" id="PF01424">
    <property type="entry name" value="R3H"/>
    <property type="match status" value="1"/>
</dbReference>
<dbReference type="Pfam" id="PF12752">
    <property type="entry name" value="SUZ"/>
    <property type="match status" value="1"/>
</dbReference>
<dbReference type="SMART" id="SM00393">
    <property type="entry name" value="R3H"/>
    <property type="match status" value="1"/>
</dbReference>
<dbReference type="SUPFAM" id="SSF82708">
    <property type="entry name" value="R3H domain"/>
    <property type="match status" value="1"/>
</dbReference>
<dbReference type="PROSITE" id="PS51061">
    <property type="entry name" value="R3H"/>
    <property type="match status" value="1"/>
</dbReference>
<dbReference type="PROSITE" id="PS51673">
    <property type="entry name" value="SUZ"/>
    <property type="match status" value="1"/>
</dbReference>
<keyword id="KW-0007">Acetylation</keyword>
<keyword id="KW-0025">Alternative splicing</keyword>
<keyword id="KW-0112">Calmodulin-binding</keyword>
<keyword id="KW-0175">Coiled coil</keyword>
<keyword id="KW-0963">Cytoplasm</keyword>
<keyword id="KW-0488">Methylation</keyword>
<keyword id="KW-0597">Phosphoprotein</keyword>
<keyword id="KW-1267">Proteomics identification</keyword>
<keyword id="KW-1185">Reference proteome</keyword>
<feature type="initiator methionine" description="Removed" evidence="2">
    <location>
        <position position="1"/>
    </location>
</feature>
<feature type="chain" id="PRO_0000064682" description="cAMP-regulated phosphoprotein 21">
    <location>
        <begin position="2"/>
        <end position="812"/>
    </location>
</feature>
<feature type="domain" description="R3H" evidence="5">
    <location>
        <begin position="164"/>
        <end position="227"/>
    </location>
</feature>
<feature type="domain" description="SUZ" evidence="6">
    <location>
        <begin position="228"/>
        <end position="300"/>
    </location>
</feature>
<feature type="region of interest" description="Disordered" evidence="7">
    <location>
        <begin position="1"/>
        <end position="130"/>
    </location>
</feature>
<feature type="region of interest" description="Disordered" evidence="7">
    <location>
        <begin position="246"/>
        <end position="281"/>
    </location>
</feature>
<feature type="region of interest" description="Disordered" evidence="7">
    <location>
        <begin position="332"/>
        <end position="436"/>
    </location>
</feature>
<feature type="region of interest" description="Disordered" evidence="7">
    <location>
        <begin position="485"/>
        <end position="544"/>
    </location>
</feature>
<feature type="region of interest" description="Disordered" evidence="7">
    <location>
        <begin position="561"/>
        <end position="632"/>
    </location>
</feature>
<feature type="coiled-coil region" evidence="4">
    <location>
        <begin position="32"/>
        <end position="58"/>
    </location>
</feature>
<feature type="compositionally biased region" description="Low complexity" evidence="7">
    <location>
        <begin position="9"/>
        <end position="25"/>
    </location>
</feature>
<feature type="compositionally biased region" description="Basic and acidic residues" evidence="7">
    <location>
        <begin position="40"/>
        <end position="53"/>
    </location>
</feature>
<feature type="compositionally biased region" description="Low complexity" evidence="7">
    <location>
        <begin position="90"/>
        <end position="100"/>
    </location>
</feature>
<feature type="compositionally biased region" description="Basic and acidic residues" evidence="7">
    <location>
        <begin position="102"/>
        <end position="130"/>
    </location>
</feature>
<feature type="compositionally biased region" description="Low complexity" evidence="7">
    <location>
        <begin position="339"/>
        <end position="349"/>
    </location>
</feature>
<feature type="compositionally biased region" description="Basic and acidic residues" evidence="7">
    <location>
        <begin position="351"/>
        <end position="360"/>
    </location>
</feature>
<feature type="compositionally biased region" description="Polar residues" evidence="7">
    <location>
        <begin position="361"/>
        <end position="373"/>
    </location>
</feature>
<feature type="compositionally biased region" description="Low complexity" evidence="7">
    <location>
        <begin position="391"/>
        <end position="423"/>
    </location>
</feature>
<feature type="compositionally biased region" description="Polar residues" evidence="7">
    <location>
        <begin position="582"/>
        <end position="602"/>
    </location>
</feature>
<feature type="compositionally biased region" description="Pro residues" evidence="7">
    <location>
        <begin position="619"/>
        <end position="632"/>
    </location>
</feature>
<feature type="modified residue" description="N-acetylserine" evidence="2">
    <location>
        <position position="2"/>
    </location>
</feature>
<feature type="modified residue" description="Phosphoserine" evidence="17">
    <location>
        <position position="33"/>
    </location>
</feature>
<feature type="modified residue" description="Phosphoserine" evidence="3">
    <location>
        <position position="56"/>
    </location>
</feature>
<feature type="modified residue" description="Phosphoserine" evidence="3">
    <location>
        <position position="134"/>
    </location>
</feature>
<feature type="modified residue" description="Phosphoserine" evidence="3">
    <location>
        <position position="300"/>
    </location>
</feature>
<feature type="modified residue" description="Phosphoserine" evidence="3">
    <location>
        <position position="363"/>
    </location>
</feature>
<feature type="modified residue" description="Phosphoserine" evidence="17">
    <location>
        <position position="383"/>
    </location>
</feature>
<feature type="modified residue" description="Phosphoserine" evidence="17">
    <location>
        <position position="562"/>
    </location>
</feature>
<feature type="modified residue" description="Asymmetric dimethylarginine" evidence="16">
    <location>
        <position position="655"/>
    </location>
</feature>
<feature type="splice variant" id="VSP_029469" description="In isoform 5." evidence="12">
    <location>
        <begin position="1"/>
        <end position="512"/>
    </location>
</feature>
<feature type="splice variant" id="VSP_029470" description="In isoform 6." evidence="12">
    <original>ESIHLQLSSFSSLQEEDKSRK</original>
    <variation>VYPLAIIINCMNGIHLCVHDS</variation>
    <location>
        <begin position="88"/>
        <end position="108"/>
    </location>
</feature>
<feature type="splice variant" id="VSP_029471" description="In isoform 2." evidence="10 12 14">
    <original>ES</original>
    <variation>TL</variation>
    <location>
        <begin position="88"/>
        <end position="89"/>
    </location>
</feature>
<feature type="splice variant" id="VSP_029472" description="In isoform 2." evidence="10 12 14">
    <location>
        <begin position="90"/>
        <end position="812"/>
    </location>
</feature>
<feature type="splice variant" id="VSP_029473" description="In isoform 6." evidence="12">
    <location>
        <begin position="109"/>
        <end position="812"/>
    </location>
</feature>
<feature type="splice variant" id="VSP_029474" description="In isoform 3 and isoform 4." evidence="11 12 13">
    <location>
        <begin position="266"/>
        <end position="299"/>
    </location>
</feature>
<feature type="splice variant" id="VSP_029475" description="In isoform 4." evidence="12">
    <location>
        <begin position="312"/>
        <end position="331"/>
    </location>
</feature>
<feature type="splice variant" id="VSP_029476" description="In isoform 3, isoform 4 and isoform 5." evidence="11 12 13">
    <original>Q</original>
    <variation>QSVQGLQASSQSVQYPAVSFPPQHLLPVSPTQHFPM</variation>
    <location>
        <position position="548"/>
    </location>
</feature>
<feature type="sequence conflict" description="In Ref. 6; CAB61414." evidence="15" ref="6">
    <location>
        <position position="312"/>
    </location>
</feature>
<comment type="function">
    <text evidence="1">Isoform 2 may act as a competitive inhibitor of calmodulin-dependent enzymes such as calcineurin in neurons.</text>
</comment>
<comment type="subunit">
    <text evidence="1">Interacts with CALM1.</text>
</comment>
<comment type="interaction">
    <interactant intactId="EBI-25931672">
        <id>Q9UBL0-2</id>
    </interactant>
    <interactant intactId="EBI-5235340">
        <id>Q7Z699</id>
        <label>SPRED1</label>
    </interactant>
    <organismsDiffer>false</organismsDiffer>
    <experiments>3</experiments>
</comment>
<comment type="subcellular location">
    <subcellularLocation>
        <location evidence="1">Cytoplasm</location>
    </subcellularLocation>
</comment>
<comment type="alternative products">
    <event type="alternative splicing"/>
    <isoform>
        <id>Q9UBL0-1</id>
        <name>1</name>
        <name>TARPP</name>
        <sequence type="displayed"/>
    </isoform>
    <isoform>
        <id>Q9UBL0-2</id>
        <name>2</name>
        <name>ARPP-21</name>
        <sequence type="described" ref="VSP_029471 VSP_029472"/>
    </isoform>
    <isoform>
        <id>Q9UBL0-3</id>
        <name>3</name>
        <sequence type="described" ref="VSP_029474 VSP_029476"/>
    </isoform>
    <isoform>
        <id>Q9UBL0-4</id>
        <name>4</name>
        <sequence type="described" ref="VSP_029474 VSP_029475 VSP_029476"/>
    </isoform>
    <isoform>
        <id>Q9UBL0-5</id>
        <name>5</name>
        <sequence type="described" ref="VSP_029469 VSP_029476"/>
    </isoform>
    <isoform>
        <id>Q9UBL0-6</id>
        <name>6</name>
        <sequence type="described" ref="VSP_029470 VSP_029473"/>
    </isoform>
</comment>
<comment type="tissue specificity">
    <text evidence="8 9">Isoform 2 is expressed in brain. Isoform 1 is present in immature thymocytes (at protein level).</text>
</comment>
<comment type="PTM">
    <text evidence="1">Phosphorylation at Ser-56 favors interaction with CALM1.</text>
</comment>
<comment type="PTM">
    <text evidence="16">Isoform 1 is methylated by CARM1 at Arg-655 in immature thymocytes.</text>
</comment>
<proteinExistence type="evidence at protein level"/>